<dbReference type="EC" id="2.1.2.11" evidence="1"/>
<dbReference type="EMBL" id="CT573326">
    <property type="protein sequence ID" value="CAK17394.1"/>
    <property type="molecule type" value="Genomic_DNA"/>
</dbReference>
<dbReference type="RefSeq" id="WP_011535756.1">
    <property type="nucleotide sequence ID" value="NC_008027.1"/>
</dbReference>
<dbReference type="SMR" id="Q1I4P2"/>
<dbReference type="STRING" id="384676.PSEEN4735"/>
<dbReference type="GeneID" id="32807700"/>
<dbReference type="KEGG" id="pen:PSEEN4735"/>
<dbReference type="eggNOG" id="COG0413">
    <property type="taxonomic scope" value="Bacteria"/>
</dbReference>
<dbReference type="HOGENOM" id="CLU_036645_1_0_6"/>
<dbReference type="OrthoDB" id="9781789at2"/>
<dbReference type="UniPathway" id="UPA00028">
    <property type="reaction ID" value="UER00003"/>
</dbReference>
<dbReference type="Proteomes" id="UP000000658">
    <property type="component" value="Chromosome"/>
</dbReference>
<dbReference type="GO" id="GO:0005737">
    <property type="term" value="C:cytoplasm"/>
    <property type="evidence" value="ECO:0007669"/>
    <property type="project" value="UniProtKB-SubCell"/>
</dbReference>
<dbReference type="GO" id="GO:0003864">
    <property type="term" value="F:3-methyl-2-oxobutanoate hydroxymethyltransferase activity"/>
    <property type="evidence" value="ECO:0007669"/>
    <property type="project" value="UniProtKB-UniRule"/>
</dbReference>
<dbReference type="GO" id="GO:0000287">
    <property type="term" value="F:magnesium ion binding"/>
    <property type="evidence" value="ECO:0007669"/>
    <property type="project" value="TreeGrafter"/>
</dbReference>
<dbReference type="GO" id="GO:0015940">
    <property type="term" value="P:pantothenate biosynthetic process"/>
    <property type="evidence" value="ECO:0007669"/>
    <property type="project" value="UniProtKB-UniRule"/>
</dbReference>
<dbReference type="CDD" id="cd06557">
    <property type="entry name" value="KPHMT-like"/>
    <property type="match status" value="1"/>
</dbReference>
<dbReference type="FunFam" id="3.20.20.60:FF:000003">
    <property type="entry name" value="3-methyl-2-oxobutanoate hydroxymethyltransferase"/>
    <property type="match status" value="1"/>
</dbReference>
<dbReference type="Gene3D" id="3.20.20.60">
    <property type="entry name" value="Phosphoenolpyruvate-binding domains"/>
    <property type="match status" value="1"/>
</dbReference>
<dbReference type="HAMAP" id="MF_00156">
    <property type="entry name" value="PanB"/>
    <property type="match status" value="1"/>
</dbReference>
<dbReference type="InterPro" id="IPR003700">
    <property type="entry name" value="Pantoate_hydroxy_MeTrfase"/>
</dbReference>
<dbReference type="InterPro" id="IPR015813">
    <property type="entry name" value="Pyrv/PenolPyrv_kinase-like_dom"/>
</dbReference>
<dbReference type="InterPro" id="IPR040442">
    <property type="entry name" value="Pyrv_kinase-like_dom_sf"/>
</dbReference>
<dbReference type="NCBIfam" id="TIGR00222">
    <property type="entry name" value="panB"/>
    <property type="match status" value="1"/>
</dbReference>
<dbReference type="NCBIfam" id="NF001452">
    <property type="entry name" value="PRK00311.1"/>
    <property type="match status" value="1"/>
</dbReference>
<dbReference type="PANTHER" id="PTHR20881">
    <property type="entry name" value="3-METHYL-2-OXOBUTANOATE HYDROXYMETHYLTRANSFERASE"/>
    <property type="match status" value="1"/>
</dbReference>
<dbReference type="PANTHER" id="PTHR20881:SF0">
    <property type="entry name" value="3-METHYL-2-OXOBUTANOATE HYDROXYMETHYLTRANSFERASE"/>
    <property type="match status" value="1"/>
</dbReference>
<dbReference type="Pfam" id="PF02548">
    <property type="entry name" value="Pantoate_transf"/>
    <property type="match status" value="1"/>
</dbReference>
<dbReference type="PIRSF" id="PIRSF000388">
    <property type="entry name" value="Pantoate_hydroxy_MeTrfase"/>
    <property type="match status" value="1"/>
</dbReference>
<dbReference type="SUPFAM" id="SSF51621">
    <property type="entry name" value="Phosphoenolpyruvate/pyruvate domain"/>
    <property type="match status" value="1"/>
</dbReference>
<gene>
    <name evidence="1" type="primary">panB2</name>
    <name type="ordered locus">PSEEN4735</name>
</gene>
<feature type="chain" id="PRO_0000297336" description="3-methyl-2-oxobutanoate hydroxymethyltransferase 2">
    <location>
        <begin position="1"/>
        <end position="266"/>
    </location>
</feature>
<feature type="active site" description="Proton acceptor" evidence="1">
    <location>
        <position position="181"/>
    </location>
</feature>
<feature type="binding site" evidence="1">
    <location>
        <begin position="45"/>
        <end position="46"/>
    </location>
    <ligand>
        <name>3-methyl-2-oxobutanoate</name>
        <dbReference type="ChEBI" id="CHEBI:11851"/>
    </ligand>
</feature>
<feature type="binding site" evidence="1">
    <location>
        <position position="45"/>
    </location>
    <ligand>
        <name>Mg(2+)</name>
        <dbReference type="ChEBI" id="CHEBI:18420"/>
    </ligand>
</feature>
<feature type="binding site" evidence="1">
    <location>
        <position position="84"/>
    </location>
    <ligand>
        <name>3-methyl-2-oxobutanoate</name>
        <dbReference type="ChEBI" id="CHEBI:11851"/>
    </ligand>
</feature>
<feature type="binding site" evidence="1">
    <location>
        <position position="84"/>
    </location>
    <ligand>
        <name>Mg(2+)</name>
        <dbReference type="ChEBI" id="CHEBI:18420"/>
    </ligand>
</feature>
<feature type="binding site" evidence="1">
    <location>
        <position position="112"/>
    </location>
    <ligand>
        <name>3-methyl-2-oxobutanoate</name>
        <dbReference type="ChEBI" id="CHEBI:11851"/>
    </ligand>
</feature>
<feature type="binding site" evidence="1">
    <location>
        <position position="114"/>
    </location>
    <ligand>
        <name>Mg(2+)</name>
        <dbReference type="ChEBI" id="CHEBI:18420"/>
    </ligand>
</feature>
<accession>Q1I4P2</accession>
<organism>
    <name type="scientific">Pseudomonas entomophila (strain L48)</name>
    <dbReference type="NCBI Taxonomy" id="384676"/>
    <lineage>
        <taxon>Bacteria</taxon>
        <taxon>Pseudomonadati</taxon>
        <taxon>Pseudomonadota</taxon>
        <taxon>Gammaproteobacteria</taxon>
        <taxon>Pseudomonadales</taxon>
        <taxon>Pseudomonadaceae</taxon>
        <taxon>Pseudomonas</taxon>
    </lineage>
</organism>
<name>PANB2_PSEE4</name>
<proteinExistence type="inferred from homology"/>
<keyword id="KW-0963">Cytoplasm</keyword>
<keyword id="KW-0460">Magnesium</keyword>
<keyword id="KW-0479">Metal-binding</keyword>
<keyword id="KW-0566">Pantothenate biosynthesis</keyword>
<keyword id="KW-0808">Transferase</keyword>
<protein>
    <recommendedName>
        <fullName evidence="1">3-methyl-2-oxobutanoate hydroxymethyltransferase 2</fullName>
        <ecNumber evidence="1">2.1.2.11</ecNumber>
    </recommendedName>
    <alternativeName>
        <fullName evidence="1">Ketopantoate hydroxymethyltransferase 2</fullName>
        <shortName evidence="1">KPHMT 2</shortName>
    </alternativeName>
</protein>
<evidence type="ECO:0000255" key="1">
    <source>
        <dbReference type="HAMAP-Rule" id="MF_00156"/>
    </source>
</evidence>
<comment type="function">
    <text evidence="1">Catalyzes the reversible reaction in which hydroxymethyl group from 5,10-methylenetetrahydrofolate is transferred onto alpha-ketoisovalerate to form ketopantoate.</text>
</comment>
<comment type="catalytic activity">
    <reaction evidence="1">
        <text>3-methyl-2-oxobutanoate + (6R)-5,10-methylene-5,6,7,8-tetrahydrofolate + H2O = 2-dehydropantoate + (6S)-5,6,7,8-tetrahydrofolate</text>
        <dbReference type="Rhea" id="RHEA:11824"/>
        <dbReference type="ChEBI" id="CHEBI:11561"/>
        <dbReference type="ChEBI" id="CHEBI:11851"/>
        <dbReference type="ChEBI" id="CHEBI:15377"/>
        <dbReference type="ChEBI" id="CHEBI:15636"/>
        <dbReference type="ChEBI" id="CHEBI:57453"/>
        <dbReference type="EC" id="2.1.2.11"/>
    </reaction>
</comment>
<comment type="cofactor">
    <cofactor evidence="1">
        <name>Mg(2+)</name>
        <dbReference type="ChEBI" id="CHEBI:18420"/>
    </cofactor>
    <text evidence="1">Binds 1 Mg(2+) ion per subunit.</text>
</comment>
<comment type="pathway">
    <text evidence="1">Cofactor biosynthesis; (R)-pantothenate biosynthesis; (R)-pantoate from 3-methyl-2-oxobutanoate: step 1/2.</text>
</comment>
<comment type="subunit">
    <text evidence="1">Homodecamer; pentamer of dimers.</text>
</comment>
<comment type="subcellular location">
    <subcellularLocation>
        <location evidence="1">Cytoplasm</location>
    </subcellularLocation>
</comment>
<comment type="similarity">
    <text evidence="1">Belongs to the PanB family.</text>
</comment>
<sequence>MPEVTLTTLNGLKAKGEKITMLTCYDATFAKAASEAGVEVLLVGDSLGMVLQGHDSTLPVSNDDMAYHTASVKRGNNGALILTDLPFMAHATPELAFTNAAQLMRAGAHMVKIEGAAWLAETIRLLAERGVPVCAHMGLTPQTVNVLGGYKVQGRQEAQARQMRADAIALEQAGAAMLLLECVPSELAAEITQAVGIPVIGIGAGSATDGQVLVLHDMLGLSLSGRVPKFVKNFMAGQPDIQSALAAYVEAVKTVSFPASEHGFSA</sequence>
<reference key="1">
    <citation type="journal article" date="2006" name="Nat. Biotechnol.">
        <title>Complete genome sequence of the entomopathogenic and metabolically versatile soil bacterium Pseudomonas entomophila.</title>
        <authorList>
            <person name="Vodovar N."/>
            <person name="Vallenet D."/>
            <person name="Cruveiller S."/>
            <person name="Rouy Z."/>
            <person name="Barbe V."/>
            <person name="Acosta C."/>
            <person name="Cattolico L."/>
            <person name="Jubin C."/>
            <person name="Lajus A."/>
            <person name="Segurens B."/>
            <person name="Vacherie B."/>
            <person name="Wincker P."/>
            <person name="Weissenbach J."/>
            <person name="Lemaitre B."/>
            <person name="Medigue C."/>
            <person name="Boccard F."/>
        </authorList>
    </citation>
    <scope>NUCLEOTIDE SEQUENCE [LARGE SCALE GENOMIC DNA]</scope>
    <source>
        <strain>L48</strain>
    </source>
</reference>